<organism>
    <name type="scientific">Salmonella newport (strain SL254)</name>
    <dbReference type="NCBI Taxonomy" id="423368"/>
    <lineage>
        <taxon>Bacteria</taxon>
        <taxon>Pseudomonadati</taxon>
        <taxon>Pseudomonadota</taxon>
        <taxon>Gammaproteobacteria</taxon>
        <taxon>Enterobacterales</taxon>
        <taxon>Enterobacteriaceae</taxon>
        <taxon>Salmonella</taxon>
    </lineage>
</organism>
<proteinExistence type="inferred from homology"/>
<keyword id="KW-0556">Organic radical</keyword>
<sequence>MITGIQITKAANDDLLNSFWLLDSEKGEARCIVAKSGFAEDEVVAVSKLGEIEYREIPMEVKPEVRVEGGQHLNVNVLRRETLEDAVKHPEKYPQLTIRVSGYAVRFNSLTPEQQRDVIARTFTESL</sequence>
<gene>
    <name evidence="1" type="primary">grcA</name>
    <name type="ordered locus">SNSL254_A2858</name>
</gene>
<protein>
    <recommendedName>
        <fullName evidence="1">Autonomous glycyl radical cofactor</fullName>
    </recommendedName>
</protein>
<reference key="1">
    <citation type="journal article" date="2011" name="J. Bacteriol.">
        <title>Comparative genomics of 28 Salmonella enterica isolates: evidence for CRISPR-mediated adaptive sublineage evolution.</title>
        <authorList>
            <person name="Fricke W.F."/>
            <person name="Mammel M.K."/>
            <person name="McDermott P.F."/>
            <person name="Tartera C."/>
            <person name="White D.G."/>
            <person name="Leclerc J.E."/>
            <person name="Ravel J."/>
            <person name="Cebula T.A."/>
        </authorList>
    </citation>
    <scope>NUCLEOTIDE SEQUENCE [LARGE SCALE GENOMIC DNA]</scope>
    <source>
        <strain>SL254</strain>
    </source>
</reference>
<feature type="chain" id="PRO_1000133998" description="Autonomous glycyl radical cofactor">
    <location>
        <begin position="1"/>
        <end position="127"/>
    </location>
</feature>
<feature type="domain" description="Glycine radical" evidence="1">
    <location>
        <begin position="5"/>
        <end position="127"/>
    </location>
</feature>
<feature type="modified residue" description="Glycine radical" evidence="1">
    <location>
        <position position="102"/>
    </location>
</feature>
<evidence type="ECO:0000255" key="1">
    <source>
        <dbReference type="HAMAP-Rule" id="MF_00806"/>
    </source>
</evidence>
<accession>B4T289</accession>
<comment type="function">
    <text evidence="1">Acts as a radical domain for damaged PFL and possibly other radical proteins.</text>
</comment>
<dbReference type="EMBL" id="CP001113">
    <property type="protein sequence ID" value="ACF62943.1"/>
    <property type="molecule type" value="Genomic_DNA"/>
</dbReference>
<dbReference type="RefSeq" id="WP_000627811.1">
    <property type="nucleotide sequence ID" value="NZ_CCMR01000001.1"/>
</dbReference>
<dbReference type="SMR" id="B4T289"/>
<dbReference type="GeneID" id="66757020"/>
<dbReference type="KEGG" id="see:SNSL254_A2858"/>
<dbReference type="HOGENOM" id="CLU_133780_0_0_6"/>
<dbReference type="Proteomes" id="UP000008824">
    <property type="component" value="Chromosome"/>
</dbReference>
<dbReference type="GO" id="GO:0005829">
    <property type="term" value="C:cytosol"/>
    <property type="evidence" value="ECO:0007669"/>
    <property type="project" value="TreeGrafter"/>
</dbReference>
<dbReference type="GO" id="GO:0008861">
    <property type="term" value="F:formate C-acetyltransferase activity"/>
    <property type="evidence" value="ECO:0007669"/>
    <property type="project" value="TreeGrafter"/>
</dbReference>
<dbReference type="FunFam" id="3.20.70.20:FF:000002">
    <property type="entry name" value="Autonomous glycyl radical cofactor"/>
    <property type="match status" value="1"/>
</dbReference>
<dbReference type="Gene3D" id="3.20.70.20">
    <property type="match status" value="1"/>
</dbReference>
<dbReference type="HAMAP" id="MF_00806">
    <property type="entry name" value="GrcA"/>
    <property type="match status" value="1"/>
</dbReference>
<dbReference type="InterPro" id="IPR050244">
    <property type="entry name" value="Auton_GlycylRad_Cofactor"/>
</dbReference>
<dbReference type="InterPro" id="IPR019777">
    <property type="entry name" value="Form_AcTrfase_GR_CS"/>
</dbReference>
<dbReference type="InterPro" id="IPR001150">
    <property type="entry name" value="Gly_radical"/>
</dbReference>
<dbReference type="InterPro" id="IPR011140">
    <property type="entry name" value="Glycyl_radical_cofactor_GrcA"/>
</dbReference>
<dbReference type="NCBIfam" id="TIGR04365">
    <property type="entry name" value="spare_glycyl"/>
    <property type="match status" value="1"/>
</dbReference>
<dbReference type="PANTHER" id="PTHR30191">
    <property type="entry name" value="FORMATE ACETYLTRANSFERASE"/>
    <property type="match status" value="1"/>
</dbReference>
<dbReference type="PANTHER" id="PTHR30191:SF0">
    <property type="entry name" value="FORMATE ACETYLTRANSFERASE 1"/>
    <property type="match status" value="1"/>
</dbReference>
<dbReference type="Pfam" id="PF01228">
    <property type="entry name" value="Gly_radical"/>
    <property type="match status" value="1"/>
</dbReference>
<dbReference type="PIRSF" id="PIRSF000378">
    <property type="entry name" value="Gly_radicl_yfiD"/>
    <property type="match status" value="1"/>
</dbReference>
<dbReference type="SUPFAM" id="SSF51998">
    <property type="entry name" value="PFL-like glycyl radical enzymes"/>
    <property type="match status" value="1"/>
</dbReference>
<dbReference type="PROSITE" id="PS00850">
    <property type="entry name" value="GLY_RADICAL_1"/>
    <property type="match status" value="1"/>
</dbReference>
<dbReference type="PROSITE" id="PS51149">
    <property type="entry name" value="GLY_RADICAL_2"/>
    <property type="match status" value="1"/>
</dbReference>
<name>GRCA_SALNS</name>